<comment type="similarity">
    <text evidence="1">Belongs to the NifZ family.</text>
</comment>
<proteinExistence type="inferred from homology"/>
<feature type="chain" id="PRO_0000096837" description="Protein NifZ">
    <location>
        <begin position="1"/>
        <end position="159"/>
    </location>
</feature>
<sequence length="159" mass="17793">MLPQFEYGDEVRLIRNVRNDGTYPGMNTGALLMRRGAVGCVYDVGTYLQDQLIYRVHFLDEGRTIGCREEELILASAPWIPNLFEFRDDVIATRSLAVRGQVLVKRGQLGSIMKVLRDEPELGIQYHVHFGDGLVLQVPEQSLAMADSTAAIEEVLDGI</sequence>
<accession>P14889</accession>
<organism>
    <name type="scientific">Azotobacter vinelandii</name>
    <dbReference type="NCBI Taxonomy" id="354"/>
    <lineage>
        <taxon>Bacteria</taxon>
        <taxon>Pseudomonadati</taxon>
        <taxon>Pseudomonadota</taxon>
        <taxon>Gammaproteobacteria</taxon>
        <taxon>Pseudomonadales</taxon>
        <taxon>Pseudomonadaceae</taxon>
        <taxon>Azotobacter</taxon>
    </lineage>
</organism>
<reference key="1">
    <citation type="journal article" date="1989" name="J. Bacteriol.">
        <title>Physical and genetic map of the major nif gene cluster from Azotobacter vinelandii.</title>
        <authorList>
            <person name="Jacobson M.R."/>
            <person name="Brigle K.E."/>
            <person name="Bennett L.T."/>
            <person name="Setterquist R.A."/>
            <person name="Wilson M.S."/>
            <person name="Cash V.L."/>
            <person name="Beynon J."/>
            <person name="Newton W.E."/>
            <person name="Dean D.R."/>
        </authorList>
    </citation>
    <scope>NUCLEOTIDE SEQUENCE [GENOMIC DNA]</scope>
    <source>
        <strain>ATCC 13705 / OP1 / DSM 366 / NCIMB 11614 / LMG 3878 / UW</strain>
    </source>
</reference>
<name>NIFZ_AZOVI</name>
<evidence type="ECO:0000305" key="1"/>
<protein>
    <recommendedName>
        <fullName>Protein NifZ</fullName>
    </recommendedName>
</protein>
<keyword id="KW-0535">Nitrogen fixation</keyword>
<dbReference type="EMBL" id="M20568">
    <property type="protein sequence ID" value="AAA64731.1"/>
    <property type="molecule type" value="Genomic_DNA"/>
</dbReference>
<dbReference type="PIR" id="E32055">
    <property type="entry name" value="E32055"/>
</dbReference>
<dbReference type="RefSeq" id="WP_012698859.1">
    <property type="nucleotide sequence ID" value="NZ_FPKM01000020.1"/>
</dbReference>
<dbReference type="OMA" id="EWGVFLQ"/>
<dbReference type="GO" id="GO:0009399">
    <property type="term" value="P:nitrogen fixation"/>
    <property type="evidence" value="ECO:0000315"/>
    <property type="project" value="CACAO"/>
</dbReference>
<dbReference type="InterPro" id="IPR007415">
    <property type="entry name" value="Nitrogenase_MoFe_mat_NifZ"/>
</dbReference>
<dbReference type="Pfam" id="PF04319">
    <property type="entry name" value="NifZ"/>
    <property type="match status" value="1"/>
</dbReference>
<gene>
    <name type="primary">nifZ</name>
</gene>